<comment type="function">
    <text evidence="1">Capsid protein self-assembles to form an icosahedral capsid with a T=1 symmetry, about 22 nm in diameter, and consisting of 60 copies of size variants of the capsid proteins, which differ in the N-terminushe capsid encapsulates the genomic ssDNA. Capsid proteins are responsible for the attachment to host cell receptors. This attachment induces virion internalization predominantly through clathrin-dependent endocytosis (By similarity).</text>
</comment>
<comment type="subcellular location">
    <subcellularLocation>
        <location evidence="3">Virion</location>
    </subcellularLocation>
</comment>
<comment type="alternative products">
    <event type="alternative initiation"/>
    <isoform>
        <id>Q90125-1</id>
        <name>VP1</name>
        <sequence type="displayed"/>
    </isoform>
    <isoform>
        <id>Q90125-2</id>
        <name>VP2</name>
        <sequence type="described" ref="VSP_018950"/>
    </isoform>
    <isoform>
        <id>Q90125-3</id>
        <name>VP3</name>
        <sequence type="described" ref="VSP_018951"/>
    </isoform>
    <isoform>
        <id>Q90125-4</id>
        <name>VP4</name>
        <sequence type="described" ref="VSP_018952"/>
    </isoform>
</comment>
<comment type="domain">
    <text>The N-terminus of VP1 is sequestered within the mature capsid. It contains a phospholipase A2-like region and putative nuclear localization signals.</text>
</comment>
<accession>Q90125</accession>
<accession>Q90126</accession>
<accession>Q90127</accession>
<accession>Q90128</accession>
<protein>
    <recommendedName>
        <fullName>Capsid protein VP1</fullName>
    </recommendedName>
    <alternativeName>
        <fullName>Coat protein VP1</fullName>
    </alternativeName>
    <alternativeName>
        <fullName>Structural protein VP1</fullName>
    </alternativeName>
</protein>
<reference key="1">
    <citation type="submission" date="1994-11" db="EMBL/GenBank/DDBJ databases">
        <title>Organization and expression of the ambisense genome of densonucleosis virus of Galleria mellonella (GmDNV).</title>
        <authorList>
            <person name="Tijssen P."/>
        </authorList>
    </citation>
    <scope>NUCLEOTIDE SEQUENCE [GENOMIC DNA]</scope>
</reference>
<reference key="2">
    <citation type="journal article" date="1998" name="Structure">
        <title>The structure of an insect parvovirus (Galleria mellonella densovirus) at 3.7 A resolution.</title>
        <authorList>
            <person name="Simpson A.A."/>
            <person name="Chipman P.R."/>
            <person name="Baker T.S."/>
            <person name="Tijssen P."/>
            <person name="Rossmann M.G."/>
        </authorList>
    </citation>
    <scope>X-RAY CRYSTALLOGRAPHY (3.6 ANGSTROMS) OF 396-811</scope>
</reference>
<dbReference type="EMBL" id="L32896">
    <property type="protein sequence ID" value="AAA66966.1"/>
    <property type="molecule type" value="Genomic_DNA"/>
</dbReference>
<dbReference type="EMBL" id="L32896">
    <property type="protein sequence ID" value="AAA66964.1"/>
    <property type="molecule type" value="Genomic_DNA"/>
</dbReference>
<dbReference type="EMBL" id="L32896">
    <property type="protein sequence ID" value="AAA66965.1"/>
    <property type="molecule type" value="Genomic_DNA"/>
</dbReference>
<dbReference type="EMBL" id="L32896">
    <property type="protein sequence ID" value="AAA66967.1"/>
    <property type="molecule type" value="Genomic_DNA"/>
</dbReference>
<dbReference type="RefSeq" id="NP_694830.1">
    <molecule id="Q90125-1"/>
    <property type="nucleotide sequence ID" value="NC_004286.1"/>
</dbReference>
<dbReference type="RefSeq" id="NP_694831.1">
    <molecule id="Q90125-2"/>
    <property type="nucleotide sequence ID" value="NC_004286.1"/>
</dbReference>
<dbReference type="RefSeq" id="NP_694832.1">
    <molecule id="Q90125-3"/>
    <property type="nucleotide sequence ID" value="NC_004286.1"/>
</dbReference>
<dbReference type="RefSeq" id="NP_694833.1">
    <molecule id="Q90125-4"/>
    <property type="nucleotide sequence ID" value="NC_004286.1"/>
</dbReference>
<dbReference type="PDB" id="1DNV">
    <property type="method" value="X-ray"/>
    <property type="resolution" value="3.60 A"/>
    <property type="chains" value="A=375-811"/>
</dbReference>
<dbReference type="PDBsum" id="1DNV"/>
<dbReference type="SMR" id="Q90125"/>
<dbReference type="KEGG" id="vg:2546231"/>
<dbReference type="OrthoDB" id="547at10239"/>
<dbReference type="EvolutionaryTrace" id="Q90125"/>
<dbReference type="Proteomes" id="UP000202161">
    <property type="component" value="Genome"/>
</dbReference>
<dbReference type="GO" id="GO:0039615">
    <property type="term" value="C:T=1 icosahedral viral capsid"/>
    <property type="evidence" value="ECO:0007669"/>
    <property type="project" value="UniProtKB-KW"/>
</dbReference>
<dbReference type="GO" id="GO:0004623">
    <property type="term" value="F:phospholipase A2 activity"/>
    <property type="evidence" value="ECO:0007669"/>
    <property type="project" value="InterPro"/>
</dbReference>
<dbReference type="GO" id="GO:0005198">
    <property type="term" value="F:structural molecule activity"/>
    <property type="evidence" value="ECO:0007669"/>
    <property type="project" value="InterPro"/>
</dbReference>
<dbReference type="GO" id="GO:0050482">
    <property type="term" value="P:arachidonate secretion"/>
    <property type="evidence" value="ECO:0007669"/>
    <property type="project" value="InterPro"/>
</dbReference>
<dbReference type="GO" id="GO:0075512">
    <property type="term" value="P:clathrin-dependent endocytosis of virus by host cell"/>
    <property type="evidence" value="ECO:0007669"/>
    <property type="project" value="UniProtKB-KW"/>
</dbReference>
<dbReference type="GO" id="GO:0006644">
    <property type="term" value="P:phospholipid metabolic process"/>
    <property type="evidence" value="ECO:0007669"/>
    <property type="project" value="InterPro"/>
</dbReference>
<dbReference type="GO" id="GO:0140267">
    <property type="term" value="P:symbiont entry into host cell via permeabilization of host membrane"/>
    <property type="evidence" value="ECO:0007669"/>
    <property type="project" value="UniProtKB-KW"/>
</dbReference>
<dbReference type="GO" id="GO:0019062">
    <property type="term" value="P:virion attachment to host cell"/>
    <property type="evidence" value="ECO:0007669"/>
    <property type="project" value="UniProtKB-KW"/>
</dbReference>
<dbReference type="Gene3D" id="1.20.90.10">
    <property type="entry name" value="Phospholipase A2 domain"/>
    <property type="match status" value="1"/>
</dbReference>
<dbReference type="InterPro" id="IPR016184">
    <property type="entry name" value="Capsid/spike_ssDNA_virus"/>
</dbReference>
<dbReference type="InterPro" id="IPR003433">
    <property type="entry name" value="Capsid_VP4_densovirus"/>
</dbReference>
<dbReference type="InterPro" id="IPR013607">
    <property type="entry name" value="Phospholipase_A2-like"/>
</dbReference>
<dbReference type="InterPro" id="IPR036444">
    <property type="entry name" value="PLipase_A2_dom_sf"/>
</dbReference>
<dbReference type="Pfam" id="PF02336">
    <property type="entry name" value="Denso_VP4"/>
    <property type="match status" value="1"/>
</dbReference>
<dbReference type="Pfam" id="PF08398">
    <property type="entry name" value="Phospholip_A2_4"/>
    <property type="match status" value="1"/>
</dbReference>
<dbReference type="SUPFAM" id="SSF88645">
    <property type="entry name" value="ssDNA viruses"/>
    <property type="match status" value="1"/>
</dbReference>
<gene>
    <name type="primary">VP</name>
</gene>
<feature type="chain" id="PRO_0000039451" description="Capsid protein VP1">
    <location>
        <begin position="1"/>
        <end position="811"/>
    </location>
</feature>
<feature type="region of interest" description="Disordered" evidence="2">
    <location>
        <begin position="321"/>
        <end position="367"/>
    </location>
</feature>
<feature type="compositionally biased region" description="Polar residues" evidence="2">
    <location>
        <begin position="346"/>
        <end position="366"/>
    </location>
</feature>
<feature type="splice variant" id="VSP_018952" description="In isoform VP4." evidence="3">
    <location>
        <begin position="1"/>
        <end position="374"/>
    </location>
</feature>
<feature type="splice variant" id="VSP_018951" description="In isoform VP3." evidence="3">
    <location>
        <begin position="1"/>
        <end position="323"/>
    </location>
</feature>
<feature type="splice variant" id="VSP_018950" description="In isoform VP2." evidence="3">
    <location>
        <begin position="1"/>
        <end position="276"/>
    </location>
</feature>
<organism>
    <name type="scientific">Galleria mellonella densovirus</name>
    <name type="common">GmDNV</name>
    <dbReference type="NCBI Taxonomy" id="37138"/>
    <lineage>
        <taxon>Viruses</taxon>
        <taxon>Monodnaviria</taxon>
        <taxon>Shotokuvirae</taxon>
        <taxon>Cossaviricota</taxon>
        <taxon>Quintoviricetes</taxon>
        <taxon>Piccovirales</taxon>
        <taxon>Parvoviridae</taxon>
        <taxon>Densovirinae</taxon>
        <taxon>Protoambidensovirus</taxon>
        <taxon>Protoambidensovirus lepidopteran1</taxon>
    </lineage>
</organism>
<proteinExistence type="evidence at protein level"/>
<keyword id="KW-0002">3D-structure</keyword>
<keyword id="KW-0024">Alternative initiation</keyword>
<keyword id="KW-0167">Capsid protein</keyword>
<keyword id="KW-1165">Clathrin-mediated endocytosis of virus by host</keyword>
<keyword id="KW-0945">Host-virus interaction</keyword>
<keyword id="KW-1140">T=1 icosahedral capsid protein</keyword>
<keyword id="KW-1161">Viral attachment to host cell</keyword>
<keyword id="KW-1162">Viral penetration into host cytoplasm</keyword>
<keyword id="KW-1173">Viral penetration via permeabilization of host membrane</keyword>
<keyword id="KW-0946">Virion</keyword>
<keyword id="KW-1164">Virus endocytosis by host</keyword>
<keyword id="KW-1160">Virus entry into host cell</keyword>
<evidence type="ECO:0000250" key="1"/>
<evidence type="ECO:0000256" key="2">
    <source>
        <dbReference type="SAM" id="MobiDB-lite"/>
    </source>
</evidence>
<evidence type="ECO:0000305" key="3"/>
<sequence>MSFFKNQLIHRARPGYRIIPESTVTEDIELGTIGEETPLLSEGVITAVEEGAIGLPEVAIGVAGAIGTHAHEWWRDRYAFKSVLTGNYTDLKGNPLKPRNAIPEKIKQLGKKIFQGDFNRAFPDNLKLETEKEKADLLRYYNHNRRLAGLSEAYPQGKGYAYAKSQKVLEAERRGLTVPGYKYLGPGNSLNRGQPINQIDEDAKEHDEAYDKVKTSQEVSRADNTFVNKALDHVVNAINFKETPGNAFGAAIGAIGIGTKQAIEKYSGVIYPSVSGMSRHINPRYINQPNWKDYIAEGNSKNWVGYSNLPDDFFQEETLSDSPMQEATKRKADSPAVETPAKKGTTGVNVNSQSTDPQNPSSSGATTDLDVTMAMSLPGTGSGTSSGGGNTQGQDVYIIPRPFSNFGKKLSTYTKSHKFMIFGLANNVIGPTGTGTTAVNRLLTTCLAEIPWQKLPLYMNQSEFDLLPPGSRVVECNVKVIFRTNRIAFETSSTVTKQATLNQISNVQTAIGLNKLGWGINRAFTAFQSDQPMIPTATTAPKYEPVTGDTGYRGMIADYYGADSTNDTAFGNAGNYPHHQVSSFTFLQNYYCMYQQTNQGTGGWPCLAEHLQQFDSKTVNNQCLIDVTYKPKMGLIKSPLNYKIIGQPTVKGTISVGDNLVNMRGAVVTNPPEATQNVAESTHNLTRNFPADLFNIYSDIEKSQVLHKGPWGHENPQIQPSVHIGIQAVPALTTGALLINSSPLNSWTDSMGYIDVMSSCTVMEAQPTHFPFSTEANTNPGNTIYRINLTPNSLTSAFNGLYGNGATLGNV</sequence>
<organismHost>
    <name type="scientific">Galleria mellonella</name>
    <name type="common">Greater wax moth</name>
    <dbReference type="NCBI Taxonomy" id="7137"/>
</organismHost>
<name>CAPSD_GMDNV</name>